<accession>B7HNI1</accession>
<sequence length="345" mass="38595">MNYKLFSPYTIKDVTLKNRIVMSPMCMYSSKNEDGQITNFHLIHYGTRAAGQVGLVMIEATAVLPEGRISNKDLGIWDDSLIEGLHKATTFIHDNGAKAAIQLAHAGRKAELETDALAPSAIPFNETMKMPIEMSKHQIKDTVLAFQQAAVRSKQAGFDVIEIHGAHGYLINEFLSPLTNKRTDEYGGSPENRYRFLREIIESINEVWNGPLFVRISANDYHPDGLTVQDYVQYTKWMKEQGVDLIDCSSGAVVPARIDVYPGYQVQYAKHIKEHANIATGAVGLITTGAQAEQILNNNEADLIFIGRELLRNPYFSRIAANELGFELEEPYQYERAPGKISTNK</sequence>
<evidence type="ECO:0000255" key="1">
    <source>
        <dbReference type="HAMAP-Rule" id="MF_01614"/>
    </source>
</evidence>
<dbReference type="EC" id="1.6.99.1" evidence="1"/>
<dbReference type="EMBL" id="CP001177">
    <property type="protein sequence ID" value="ACJ78075.1"/>
    <property type="molecule type" value="Genomic_DNA"/>
</dbReference>
<dbReference type="SMR" id="B7HNI1"/>
<dbReference type="KEGG" id="bcr:BCAH187_A2139"/>
<dbReference type="HOGENOM" id="CLU_012153_2_1_9"/>
<dbReference type="Proteomes" id="UP000002214">
    <property type="component" value="Chromosome"/>
</dbReference>
<dbReference type="GO" id="GO:0010181">
    <property type="term" value="F:FMN binding"/>
    <property type="evidence" value="ECO:0007669"/>
    <property type="project" value="UniProtKB-UniRule"/>
</dbReference>
<dbReference type="GO" id="GO:0050661">
    <property type="term" value="F:NADP binding"/>
    <property type="evidence" value="ECO:0007669"/>
    <property type="project" value="UniProtKB-UniRule"/>
</dbReference>
<dbReference type="GO" id="GO:0003959">
    <property type="term" value="F:NADPH dehydrogenase activity"/>
    <property type="evidence" value="ECO:0007669"/>
    <property type="project" value="UniProtKB-UniRule"/>
</dbReference>
<dbReference type="GO" id="GO:0009636">
    <property type="term" value="P:response to toxic substance"/>
    <property type="evidence" value="ECO:0007669"/>
    <property type="project" value="UniProtKB-KW"/>
</dbReference>
<dbReference type="CDD" id="cd02932">
    <property type="entry name" value="OYE_YqiM_FMN"/>
    <property type="match status" value="1"/>
</dbReference>
<dbReference type="Gene3D" id="3.20.20.70">
    <property type="entry name" value="Aldolase class I"/>
    <property type="match status" value="1"/>
</dbReference>
<dbReference type="HAMAP" id="MF_01614">
    <property type="entry name" value="NamA"/>
    <property type="match status" value="1"/>
</dbReference>
<dbReference type="InterPro" id="IPR013785">
    <property type="entry name" value="Aldolase_TIM"/>
</dbReference>
<dbReference type="InterPro" id="IPR023663">
    <property type="entry name" value="NADPH_DH_bac"/>
</dbReference>
<dbReference type="InterPro" id="IPR001155">
    <property type="entry name" value="OxRdtase_FMN_N"/>
</dbReference>
<dbReference type="InterPro" id="IPR044152">
    <property type="entry name" value="YqjM-like"/>
</dbReference>
<dbReference type="NCBIfam" id="NF010047">
    <property type="entry name" value="PRK13523.1"/>
    <property type="match status" value="1"/>
</dbReference>
<dbReference type="PANTHER" id="PTHR43303">
    <property type="entry name" value="NADPH DEHYDROGENASE C23G7.10C-RELATED"/>
    <property type="match status" value="1"/>
</dbReference>
<dbReference type="PANTHER" id="PTHR43303:SF4">
    <property type="entry name" value="NADPH DEHYDROGENASE C23G7.10C-RELATED"/>
    <property type="match status" value="1"/>
</dbReference>
<dbReference type="Pfam" id="PF00724">
    <property type="entry name" value="Oxidored_FMN"/>
    <property type="match status" value="1"/>
</dbReference>
<dbReference type="SUPFAM" id="SSF51395">
    <property type="entry name" value="FMN-linked oxidoreductases"/>
    <property type="match status" value="1"/>
</dbReference>
<name>NAMA_BACC7</name>
<organism>
    <name type="scientific">Bacillus cereus (strain AH187)</name>
    <dbReference type="NCBI Taxonomy" id="405534"/>
    <lineage>
        <taxon>Bacteria</taxon>
        <taxon>Bacillati</taxon>
        <taxon>Bacillota</taxon>
        <taxon>Bacilli</taxon>
        <taxon>Bacillales</taxon>
        <taxon>Bacillaceae</taxon>
        <taxon>Bacillus</taxon>
        <taxon>Bacillus cereus group</taxon>
    </lineage>
</organism>
<gene>
    <name evidence="1" type="primary">namA</name>
    <name type="ordered locus">BCAH187_A2139</name>
</gene>
<comment type="function">
    <text evidence="1">Catalyzes the reduction of the double bond of an array of alpha,beta-unsaturated aldehydes and ketones. It also reduces the nitro group of nitroester and nitroaromatic compounds. It could have a role in detoxification processes.</text>
</comment>
<comment type="catalytic activity">
    <reaction evidence="1">
        <text>A + NADPH + H(+) = AH2 + NADP(+)</text>
        <dbReference type="Rhea" id="RHEA:13149"/>
        <dbReference type="ChEBI" id="CHEBI:13193"/>
        <dbReference type="ChEBI" id="CHEBI:15378"/>
        <dbReference type="ChEBI" id="CHEBI:17499"/>
        <dbReference type="ChEBI" id="CHEBI:57783"/>
        <dbReference type="ChEBI" id="CHEBI:58349"/>
        <dbReference type="EC" id="1.6.99.1"/>
    </reaction>
</comment>
<comment type="cofactor">
    <cofactor evidence="1">
        <name>FMN</name>
        <dbReference type="ChEBI" id="CHEBI:58210"/>
    </cofactor>
</comment>
<comment type="subunit">
    <text evidence="1">Homotetramer.</text>
</comment>
<comment type="similarity">
    <text evidence="1">Belongs to the NADH:flavin oxidoreductase/NADH oxidase family. NamA subfamily.</text>
</comment>
<keyword id="KW-0216">Detoxification</keyword>
<keyword id="KW-0285">Flavoprotein</keyword>
<keyword id="KW-0288">FMN</keyword>
<keyword id="KW-0521">NADP</keyword>
<keyword id="KW-0560">Oxidoreductase</keyword>
<proteinExistence type="inferred from homology"/>
<protein>
    <recommendedName>
        <fullName evidence="1">NADPH dehydrogenase</fullName>
        <ecNumber evidence="1">1.6.99.1</ecNumber>
    </recommendedName>
</protein>
<feature type="chain" id="PRO_1000185862" description="NADPH dehydrogenase">
    <location>
        <begin position="1"/>
        <end position="345"/>
    </location>
</feature>
<feature type="binding site" evidence="1">
    <location>
        <begin position="23"/>
        <end position="26"/>
    </location>
    <ligand>
        <name>FMN</name>
        <dbReference type="ChEBI" id="CHEBI:58210"/>
    </ligand>
</feature>
<feature type="binding site" evidence="1">
    <location>
        <position position="28"/>
    </location>
    <ligand>
        <name>substrate</name>
    </ligand>
</feature>
<feature type="binding site" evidence="1">
    <location>
        <position position="60"/>
    </location>
    <ligand>
        <name>FMN</name>
        <dbReference type="ChEBI" id="CHEBI:58210"/>
    </ligand>
</feature>
<feature type="binding site" evidence="1">
    <location>
        <position position="102"/>
    </location>
    <ligand>
        <name>FMN</name>
        <dbReference type="ChEBI" id="CHEBI:58210"/>
    </ligand>
</feature>
<feature type="binding site" evidence="1">
    <location>
        <begin position="164"/>
        <end position="167"/>
    </location>
    <ligand>
        <name>substrate</name>
    </ligand>
</feature>
<feature type="binding site" evidence="1">
    <location>
        <position position="215"/>
    </location>
    <ligand>
        <name>FMN</name>
        <dbReference type="ChEBI" id="CHEBI:58210"/>
    </ligand>
</feature>
<feature type="binding site" evidence="1">
    <location>
        <begin position="307"/>
        <end position="308"/>
    </location>
    <ligand>
        <name>FMN</name>
        <dbReference type="ChEBI" id="CHEBI:58210"/>
    </ligand>
</feature>
<reference key="1">
    <citation type="submission" date="2008-10" db="EMBL/GenBank/DDBJ databases">
        <title>Genome sequence of Bacillus cereus AH187.</title>
        <authorList>
            <person name="Dodson R.J."/>
            <person name="Durkin A.S."/>
            <person name="Rosovitz M.J."/>
            <person name="Rasko D.A."/>
            <person name="Kolsto A.B."/>
            <person name="Okstad O.A."/>
            <person name="Ravel J."/>
            <person name="Sutton G."/>
        </authorList>
    </citation>
    <scope>NUCLEOTIDE SEQUENCE [LARGE SCALE GENOMIC DNA]</scope>
    <source>
        <strain>AH187</strain>
    </source>
</reference>